<sequence>MKLLGGLLLLFTATCLCNVDCDIYKKYPVVAIPCPIENIPVCGSDYITYGNKCKLCTEILRSNGKIQFLHEGHC</sequence>
<accession>Q6IE51</accession>
<proteinExistence type="inferred from homology"/>
<organism>
    <name type="scientific">Rattus norvegicus</name>
    <name type="common">Rat</name>
    <dbReference type="NCBI Taxonomy" id="10116"/>
    <lineage>
        <taxon>Eukaryota</taxon>
        <taxon>Metazoa</taxon>
        <taxon>Chordata</taxon>
        <taxon>Craniata</taxon>
        <taxon>Vertebrata</taxon>
        <taxon>Euteleostomi</taxon>
        <taxon>Mammalia</taxon>
        <taxon>Eutheria</taxon>
        <taxon>Euarchontoglires</taxon>
        <taxon>Glires</taxon>
        <taxon>Rodentia</taxon>
        <taxon>Myomorpha</taxon>
        <taxon>Muroidea</taxon>
        <taxon>Muridae</taxon>
        <taxon>Murinae</taxon>
        <taxon>Rattus</taxon>
    </lineage>
</organism>
<protein>
    <recommendedName>
        <fullName>Serine protease inhibitor Kazal-type 7</fullName>
    </recommendedName>
    <alternativeName>
        <fullName>Esophagus cancer-related gene 2 protein</fullName>
        <shortName>ECRG-2</shortName>
    </alternativeName>
</protein>
<reference key="1">
    <citation type="journal article" date="2004" name="Nature">
        <title>Genome sequence of the Brown Norway rat yields insights into mammalian evolution.</title>
        <authorList>
            <person name="Gibbs R.A."/>
            <person name="Weinstock G.M."/>
            <person name="Metzker M.L."/>
            <person name="Muzny D.M."/>
            <person name="Sodergren E.J."/>
            <person name="Scherer S."/>
            <person name="Scott G."/>
            <person name="Steffen D."/>
            <person name="Worley K.C."/>
            <person name="Burch P.E."/>
            <person name="Okwuonu G."/>
            <person name="Hines S."/>
            <person name="Lewis L."/>
            <person name="Deramo C."/>
            <person name="Delgado O."/>
            <person name="Dugan-Rocha S."/>
            <person name="Miner G."/>
            <person name="Morgan M."/>
            <person name="Hawes A."/>
            <person name="Gill R."/>
            <person name="Holt R.A."/>
            <person name="Adams M.D."/>
            <person name="Amanatides P.G."/>
            <person name="Baden-Tillson H."/>
            <person name="Barnstead M."/>
            <person name="Chin S."/>
            <person name="Evans C.A."/>
            <person name="Ferriera S."/>
            <person name="Fosler C."/>
            <person name="Glodek A."/>
            <person name="Gu Z."/>
            <person name="Jennings D."/>
            <person name="Kraft C.L."/>
            <person name="Nguyen T."/>
            <person name="Pfannkoch C.M."/>
            <person name="Sitter C."/>
            <person name="Sutton G.G."/>
            <person name="Venter J.C."/>
            <person name="Woodage T."/>
            <person name="Smith D."/>
            <person name="Lee H.-M."/>
            <person name="Gustafson E."/>
            <person name="Cahill P."/>
            <person name="Kana A."/>
            <person name="Doucette-Stamm L."/>
            <person name="Weinstock K."/>
            <person name="Fechtel K."/>
            <person name="Weiss R.B."/>
            <person name="Dunn D.M."/>
            <person name="Green E.D."/>
            <person name="Blakesley R.W."/>
            <person name="Bouffard G.G."/>
            <person name="De Jong P.J."/>
            <person name="Osoegawa K."/>
            <person name="Zhu B."/>
            <person name="Marra M."/>
            <person name="Schein J."/>
            <person name="Bosdet I."/>
            <person name="Fjell C."/>
            <person name="Jones S."/>
            <person name="Krzywinski M."/>
            <person name="Mathewson C."/>
            <person name="Siddiqui A."/>
            <person name="Wye N."/>
            <person name="McPherson J."/>
            <person name="Zhao S."/>
            <person name="Fraser C.M."/>
            <person name="Shetty J."/>
            <person name="Shatsman S."/>
            <person name="Geer K."/>
            <person name="Chen Y."/>
            <person name="Abramzon S."/>
            <person name="Nierman W.C."/>
            <person name="Havlak P.H."/>
            <person name="Chen R."/>
            <person name="Durbin K.J."/>
            <person name="Egan A."/>
            <person name="Ren Y."/>
            <person name="Song X.-Z."/>
            <person name="Li B."/>
            <person name="Liu Y."/>
            <person name="Qin X."/>
            <person name="Cawley S."/>
            <person name="Cooney A.J."/>
            <person name="D'Souza L.M."/>
            <person name="Martin K."/>
            <person name="Wu J.Q."/>
            <person name="Gonzalez-Garay M.L."/>
            <person name="Jackson A.R."/>
            <person name="Kalafus K.J."/>
            <person name="McLeod M.P."/>
            <person name="Milosavljevic A."/>
            <person name="Virk D."/>
            <person name="Volkov A."/>
            <person name="Wheeler D.A."/>
            <person name="Zhang Z."/>
            <person name="Bailey J.A."/>
            <person name="Eichler E.E."/>
            <person name="Tuzun E."/>
            <person name="Birney E."/>
            <person name="Mongin E."/>
            <person name="Ureta-Vidal A."/>
            <person name="Woodwark C."/>
            <person name="Zdobnov E."/>
            <person name="Bork P."/>
            <person name="Suyama M."/>
            <person name="Torrents D."/>
            <person name="Alexandersson M."/>
            <person name="Trask B.J."/>
            <person name="Young J.M."/>
            <person name="Huang H."/>
            <person name="Wang H."/>
            <person name="Xing H."/>
            <person name="Daniels S."/>
            <person name="Gietzen D."/>
            <person name="Schmidt J."/>
            <person name="Stevens K."/>
            <person name="Vitt U."/>
            <person name="Wingrove J."/>
            <person name="Camara F."/>
            <person name="Mar Alba M."/>
            <person name="Abril J.F."/>
            <person name="Guigo R."/>
            <person name="Smit A."/>
            <person name="Dubchak I."/>
            <person name="Rubin E.M."/>
            <person name="Couronne O."/>
            <person name="Poliakov A."/>
            <person name="Huebner N."/>
            <person name="Ganten D."/>
            <person name="Goesele C."/>
            <person name="Hummel O."/>
            <person name="Kreitler T."/>
            <person name="Lee Y.-A."/>
            <person name="Monti J."/>
            <person name="Schulz H."/>
            <person name="Zimdahl H."/>
            <person name="Himmelbauer H."/>
            <person name="Lehrach H."/>
            <person name="Jacob H.J."/>
            <person name="Bromberg S."/>
            <person name="Gullings-Handley J."/>
            <person name="Jensen-Seaman M.I."/>
            <person name="Kwitek A.E."/>
            <person name="Lazar J."/>
            <person name="Pasko D."/>
            <person name="Tonellato P.J."/>
            <person name="Twigger S."/>
            <person name="Ponting C.P."/>
            <person name="Duarte J.M."/>
            <person name="Rice S."/>
            <person name="Goodstadt L."/>
            <person name="Beatson S.A."/>
            <person name="Emes R.D."/>
            <person name="Winter E.E."/>
            <person name="Webber C."/>
            <person name="Brandt P."/>
            <person name="Nyakatura G."/>
            <person name="Adetobi M."/>
            <person name="Chiaromonte F."/>
            <person name="Elnitski L."/>
            <person name="Eswara P."/>
            <person name="Hardison R.C."/>
            <person name="Hou M."/>
            <person name="Kolbe D."/>
            <person name="Makova K."/>
            <person name="Miller W."/>
            <person name="Nekrutenko A."/>
            <person name="Riemer C."/>
            <person name="Schwartz S."/>
            <person name="Taylor J."/>
            <person name="Yang S."/>
            <person name="Zhang Y."/>
            <person name="Lindpaintner K."/>
            <person name="Andrews T.D."/>
            <person name="Caccamo M."/>
            <person name="Clamp M."/>
            <person name="Clarke L."/>
            <person name="Curwen V."/>
            <person name="Durbin R.M."/>
            <person name="Eyras E."/>
            <person name="Searle S.M."/>
            <person name="Cooper G.M."/>
            <person name="Batzoglou S."/>
            <person name="Brudno M."/>
            <person name="Sidow A."/>
            <person name="Stone E.A."/>
            <person name="Payseur B.A."/>
            <person name="Bourque G."/>
            <person name="Lopez-Otin C."/>
            <person name="Puente X.S."/>
            <person name="Chakrabarti K."/>
            <person name="Chatterji S."/>
            <person name="Dewey C."/>
            <person name="Pachter L."/>
            <person name="Bray N."/>
            <person name="Yap V.B."/>
            <person name="Caspi A."/>
            <person name="Tesler G."/>
            <person name="Pevzner P.A."/>
            <person name="Haussler D."/>
            <person name="Roskin K.M."/>
            <person name="Baertsch R."/>
            <person name="Clawson H."/>
            <person name="Furey T.S."/>
            <person name="Hinrichs A.S."/>
            <person name="Karolchik D."/>
            <person name="Kent W.J."/>
            <person name="Rosenbloom K.R."/>
            <person name="Trumbower H."/>
            <person name="Weirauch M."/>
            <person name="Cooper D.N."/>
            <person name="Stenson P.D."/>
            <person name="Ma B."/>
            <person name="Brent M."/>
            <person name="Arumugam M."/>
            <person name="Shteynberg D."/>
            <person name="Copley R.R."/>
            <person name="Taylor M.S."/>
            <person name="Riethman H."/>
            <person name="Mudunuri U."/>
            <person name="Peterson J."/>
            <person name="Guyer M."/>
            <person name="Felsenfeld A."/>
            <person name="Old S."/>
            <person name="Mockrin S."/>
            <person name="Collins F.S."/>
        </authorList>
    </citation>
    <scope>NUCLEOTIDE SEQUENCE [LARGE SCALE GENOMIC DNA]</scope>
    <source>
        <strain>Brown Norway</strain>
    </source>
</reference>
<reference key="2">
    <citation type="journal article" date="2004" name="Genome Res.">
        <title>A genomic analysis of rat proteases and protease inhibitors.</title>
        <authorList>
            <person name="Puente X.S."/>
            <person name="Lopez-Otin C."/>
        </authorList>
    </citation>
    <scope>IDENTIFICATION</scope>
</reference>
<keyword id="KW-1015">Disulfide bond</keyword>
<keyword id="KW-0646">Protease inhibitor</keyword>
<keyword id="KW-1185">Reference proteome</keyword>
<keyword id="KW-0964">Secreted</keyword>
<keyword id="KW-0722">Serine protease inhibitor</keyword>
<keyword id="KW-0732">Signal</keyword>
<comment type="function">
    <text>Probable serine protease inhibitor.</text>
</comment>
<comment type="subcellular location">
    <subcellularLocation>
        <location evidence="3">Secreted</location>
    </subcellularLocation>
</comment>
<gene>
    <name type="primary">Spink7</name>
    <name type="synonym">Ecg2</name>
</gene>
<feature type="signal peptide" evidence="1">
    <location>
        <begin position="1"/>
        <end position="17"/>
    </location>
</feature>
<feature type="chain" id="PRO_0000016567" description="Serine protease inhibitor Kazal-type 7">
    <location>
        <begin position="18"/>
        <end position="74"/>
    </location>
</feature>
<feature type="domain" description="Kazal-like" evidence="2">
    <location>
        <begin position="18"/>
        <end position="74"/>
    </location>
</feature>
<feature type="site" description="Reactive bond" evidence="2">
    <location>
        <begin position="36"/>
        <end position="37"/>
    </location>
</feature>
<feature type="disulfide bond" evidence="2">
    <location>
        <begin position="21"/>
        <end position="56"/>
    </location>
</feature>
<feature type="disulfide bond" evidence="2">
    <location>
        <begin position="34"/>
        <end position="53"/>
    </location>
</feature>
<feature type="disulfide bond" evidence="2">
    <location>
        <begin position="42"/>
        <end position="74"/>
    </location>
</feature>
<name>ISK7_RAT</name>
<evidence type="ECO:0000255" key="1"/>
<evidence type="ECO:0000255" key="2">
    <source>
        <dbReference type="PROSITE-ProRule" id="PRU00798"/>
    </source>
</evidence>
<evidence type="ECO:0000305" key="3"/>
<dbReference type="EMBL" id="AC107274">
    <property type="status" value="NOT_ANNOTATED_CDS"/>
    <property type="molecule type" value="Genomic_DNA"/>
</dbReference>
<dbReference type="EMBL" id="BN000342">
    <property type="protein sequence ID" value="CAE51394.1"/>
    <property type="molecule type" value="mRNA"/>
</dbReference>
<dbReference type="SMR" id="Q6IE51"/>
<dbReference type="FunCoup" id="Q6IE51">
    <property type="interactions" value="5"/>
</dbReference>
<dbReference type="STRING" id="10116.ENSRNOP00000044400"/>
<dbReference type="MEROPS" id="I01.057"/>
<dbReference type="UCSC" id="RGD:1303077">
    <property type="organism name" value="rat"/>
</dbReference>
<dbReference type="AGR" id="RGD:1303077"/>
<dbReference type="RGD" id="1303077">
    <property type="gene designation" value="Spink7"/>
</dbReference>
<dbReference type="InParanoid" id="Q6IE51"/>
<dbReference type="PhylomeDB" id="Q6IE51"/>
<dbReference type="PRO" id="PR:Q6IE51"/>
<dbReference type="Proteomes" id="UP000002494">
    <property type="component" value="Unplaced"/>
</dbReference>
<dbReference type="GO" id="GO:0005615">
    <property type="term" value="C:extracellular space"/>
    <property type="evidence" value="ECO:0000266"/>
    <property type="project" value="RGD"/>
</dbReference>
<dbReference type="GO" id="GO:0004867">
    <property type="term" value="F:serine-type endopeptidase inhibitor activity"/>
    <property type="evidence" value="ECO:0007669"/>
    <property type="project" value="UniProtKB-KW"/>
</dbReference>
<dbReference type="GO" id="GO:0006954">
    <property type="term" value="P:inflammatory response"/>
    <property type="evidence" value="ECO:0000266"/>
    <property type="project" value="RGD"/>
</dbReference>
<dbReference type="GO" id="GO:1900016">
    <property type="term" value="P:negative regulation of cytokine production involved in inflammatory response"/>
    <property type="evidence" value="ECO:0000266"/>
    <property type="project" value="RGD"/>
</dbReference>
<dbReference type="Gene3D" id="3.30.60.30">
    <property type="match status" value="1"/>
</dbReference>
<dbReference type="InterPro" id="IPR050159">
    <property type="entry name" value="Kazal-type_SerProtInhib"/>
</dbReference>
<dbReference type="InterPro" id="IPR002350">
    <property type="entry name" value="Kazal_dom"/>
</dbReference>
<dbReference type="InterPro" id="IPR036058">
    <property type="entry name" value="Kazal_dom_sf"/>
</dbReference>
<dbReference type="PANTHER" id="PTHR47499:SF1">
    <property type="entry name" value="SERINE PROTEASE INHIBITOR KAZAL-TYPE 7"/>
    <property type="match status" value="1"/>
</dbReference>
<dbReference type="PANTHER" id="PTHR47499">
    <property type="entry name" value="SERINE PROTEASE INHIBITOR KAZAL-TYPE 7 SPINK7"/>
    <property type="match status" value="1"/>
</dbReference>
<dbReference type="Pfam" id="PF00050">
    <property type="entry name" value="Kazal_1"/>
    <property type="match status" value="1"/>
</dbReference>
<dbReference type="SMART" id="SM00280">
    <property type="entry name" value="KAZAL"/>
    <property type="match status" value="1"/>
</dbReference>
<dbReference type="SUPFAM" id="SSF100895">
    <property type="entry name" value="Kazal-type serine protease inhibitors"/>
    <property type="match status" value="1"/>
</dbReference>
<dbReference type="PROSITE" id="PS00282">
    <property type="entry name" value="KAZAL_1"/>
    <property type="match status" value="1"/>
</dbReference>
<dbReference type="PROSITE" id="PS51465">
    <property type="entry name" value="KAZAL_2"/>
    <property type="match status" value="1"/>
</dbReference>